<feature type="chain" id="PRO_0000151618" description="Arginine--tRNA ligase">
    <location>
        <begin position="1"/>
        <end position="563"/>
    </location>
</feature>
<feature type="short sequence motif" description="'HIGH' region">
    <location>
        <begin position="121"/>
        <end position="131"/>
    </location>
</feature>
<proteinExistence type="evidence at protein level"/>
<reference key="1">
    <citation type="journal article" date="2001" name="Science">
        <title>Complete genome sequence of a virulent isolate of Streptococcus pneumoniae.</title>
        <authorList>
            <person name="Tettelin H."/>
            <person name="Nelson K.E."/>
            <person name="Paulsen I.T."/>
            <person name="Eisen J.A."/>
            <person name="Read T.D."/>
            <person name="Peterson S.N."/>
            <person name="Heidelberg J.F."/>
            <person name="DeBoy R.T."/>
            <person name="Haft D.H."/>
            <person name="Dodson R.J."/>
            <person name="Durkin A.S."/>
            <person name="Gwinn M.L."/>
            <person name="Kolonay J.F."/>
            <person name="Nelson W.C."/>
            <person name="Peterson J.D."/>
            <person name="Umayam L.A."/>
            <person name="White O."/>
            <person name="Salzberg S.L."/>
            <person name="Lewis M.R."/>
            <person name="Radune D."/>
            <person name="Holtzapple E.K."/>
            <person name="Khouri H.M."/>
            <person name="Wolf A.M."/>
            <person name="Utterback T.R."/>
            <person name="Hansen C.L."/>
            <person name="McDonald L.A."/>
            <person name="Feldblyum T.V."/>
            <person name="Angiuoli S.V."/>
            <person name="Dickinson T."/>
            <person name="Hickey E.K."/>
            <person name="Holt I.E."/>
            <person name="Loftus B.J."/>
            <person name="Yang F."/>
            <person name="Smith H.O."/>
            <person name="Venter J.C."/>
            <person name="Dougherty B.A."/>
            <person name="Morrison D.A."/>
            <person name="Hollingshead S.K."/>
            <person name="Fraser C.M."/>
        </authorList>
    </citation>
    <scope>NUCLEOTIDE SEQUENCE [LARGE SCALE GENOMIC DNA]</scope>
    <source>
        <strain>ATCC BAA-334 / TIGR4</strain>
    </source>
</reference>
<reference key="2">
    <citation type="journal article" date="1988" name="J. Bacteriol.">
        <title>Nucleotide sequence of the hexA gene for DNA mismatch repair in Streptococcus pneumoniae and homology of hexA to mutS of Escherichia coli and Salmonella typhimurium.</title>
        <authorList>
            <person name="Priebe S.D."/>
            <person name="Hadi S.M."/>
            <person name="Greenberg B."/>
            <person name="Lacks S.A."/>
        </authorList>
    </citation>
    <scope>NUCLEOTIDE SEQUENCE [GENOMIC DNA] OF 1-109</scope>
    <source>
        <strain>175</strain>
    </source>
</reference>
<name>SYR_STRPN</name>
<sequence length="563" mass="63472">MNTKELIASELSSIIDSLDQEAILKLLETPKNSEMGDIAFPAFSLAKVERKAPQMIAAELAEKMNSQAFEKVVATGPYVNFFLDKSAISAQVLQAVTTEKEHYADQNIGKQENVVIDMSSPNIAKPFSIGHLRSTVIGDSLSHIFQKIGYQTVKVNHLGDWGKQFGMLIVAYKKWGDEEAVKAHPIDELLKLYVRINAEAENDPSLDEEAREWFRKLENGDEEALALWQWFRDESLVEFNRLYNELKVEFDSYNGEAFYNDKMDAVVDILSEKGLLLESEGAQVVNLEKYGIEHPALIKKSDGATLYITRDLAAALYRKNEYQFAKSIYVVGQEQSAHFKQLKAVLQEMGYDWSDDITHVPFGLVTKEGKKLSTRKGNVILLEPTVAEAVSRAKVQIEAKNPELENKDQVAHAVGIGAIKFYDLKTDRTNGYDFDLEAMVSFEGETGPYVQYAYARIQSILRKADFKPETAGNYSLNDTESWEIIKLIQDFPRIINRAADNFEPSIIAKFAISLAQSFNKYYAHTRILDESPERDSRLALSYATAVVLKEALRLLGVEAPEKM</sequence>
<organism>
    <name type="scientific">Streptococcus pneumoniae serotype 4 (strain ATCC BAA-334 / TIGR4)</name>
    <dbReference type="NCBI Taxonomy" id="170187"/>
    <lineage>
        <taxon>Bacteria</taxon>
        <taxon>Bacillati</taxon>
        <taxon>Bacillota</taxon>
        <taxon>Bacilli</taxon>
        <taxon>Lactobacillales</taxon>
        <taxon>Streptococcaceae</taxon>
        <taxon>Streptococcus</taxon>
    </lineage>
</organism>
<keyword id="KW-0030">Aminoacyl-tRNA synthetase</keyword>
<keyword id="KW-0067">ATP-binding</keyword>
<keyword id="KW-0963">Cytoplasm</keyword>
<keyword id="KW-0436">Ligase</keyword>
<keyword id="KW-0547">Nucleotide-binding</keyword>
<keyword id="KW-0648">Protein biosynthesis</keyword>
<keyword id="KW-1185">Reference proteome</keyword>
<dbReference type="EC" id="6.1.1.19"/>
<dbReference type="EMBL" id="AE005672">
    <property type="protein sequence ID" value="AAK76139.1"/>
    <property type="molecule type" value="Genomic_DNA"/>
</dbReference>
<dbReference type="EMBL" id="M18729">
    <property type="protein sequence ID" value="AAA88595.1"/>
    <property type="molecule type" value="Genomic_DNA"/>
</dbReference>
<dbReference type="PIR" id="B95243">
    <property type="entry name" value="B95243"/>
</dbReference>
<dbReference type="RefSeq" id="WP_001092737.1">
    <property type="nucleotide sequence ID" value="NZ_CP155539.1"/>
</dbReference>
<dbReference type="SMR" id="Q54869"/>
<dbReference type="IntAct" id="Q54869">
    <property type="interactions" value="2"/>
</dbReference>
<dbReference type="PaxDb" id="170187-SP_2078"/>
<dbReference type="EnsemblBacteria" id="AAK76139">
    <property type="protein sequence ID" value="AAK76139"/>
    <property type="gene ID" value="SP_2078"/>
</dbReference>
<dbReference type="KEGG" id="spn:SP_2078"/>
<dbReference type="eggNOG" id="COG0018">
    <property type="taxonomic scope" value="Bacteria"/>
</dbReference>
<dbReference type="PhylomeDB" id="Q54869"/>
<dbReference type="BioCyc" id="SPNE170187:G1FZB-2164-MONOMER"/>
<dbReference type="Proteomes" id="UP000000585">
    <property type="component" value="Chromosome"/>
</dbReference>
<dbReference type="GO" id="GO:0005737">
    <property type="term" value="C:cytoplasm"/>
    <property type="evidence" value="ECO:0007669"/>
    <property type="project" value="UniProtKB-SubCell"/>
</dbReference>
<dbReference type="GO" id="GO:0004814">
    <property type="term" value="F:arginine-tRNA ligase activity"/>
    <property type="evidence" value="ECO:0007669"/>
    <property type="project" value="UniProtKB-UniRule"/>
</dbReference>
<dbReference type="GO" id="GO:0005524">
    <property type="term" value="F:ATP binding"/>
    <property type="evidence" value="ECO:0007669"/>
    <property type="project" value="UniProtKB-UniRule"/>
</dbReference>
<dbReference type="GO" id="GO:0006420">
    <property type="term" value="P:arginyl-tRNA aminoacylation"/>
    <property type="evidence" value="ECO:0007669"/>
    <property type="project" value="UniProtKB-UniRule"/>
</dbReference>
<dbReference type="CDD" id="cd07956">
    <property type="entry name" value="Anticodon_Ia_Arg"/>
    <property type="match status" value="1"/>
</dbReference>
<dbReference type="CDD" id="cd00671">
    <property type="entry name" value="ArgRS_core"/>
    <property type="match status" value="1"/>
</dbReference>
<dbReference type="FunFam" id="1.10.730.10:FF:000034">
    <property type="entry name" value="Arginine--tRNA ligase"/>
    <property type="match status" value="1"/>
</dbReference>
<dbReference type="FunFam" id="3.30.1360.70:FF:000005">
    <property type="entry name" value="Arginine--tRNA ligase"/>
    <property type="match status" value="1"/>
</dbReference>
<dbReference type="FunFam" id="3.40.50.620:FF:000116">
    <property type="entry name" value="Arginine--tRNA ligase"/>
    <property type="match status" value="1"/>
</dbReference>
<dbReference type="Gene3D" id="3.30.1360.70">
    <property type="entry name" value="Arginyl tRNA synthetase N-terminal domain"/>
    <property type="match status" value="1"/>
</dbReference>
<dbReference type="Gene3D" id="3.40.50.620">
    <property type="entry name" value="HUPs"/>
    <property type="match status" value="1"/>
</dbReference>
<dbReference type="Gene3D" id="1.10.730.10">
    <property type="entry name" value="Isoleucyl-tRNA Synthetase, Domain 1"/>
    <property type="match status" value="1"/>
</dbReference>
<dbReference type="HAMAP" id="MF_00123">
    <property type="entry name" value="Arg_tRNA_synth"/>
    <property type="match status" value="1"/>
</dbReference>
<dbReference type="InterPro" id="IPR001278">
    <property type="entry name" value="Arg-tRNA-ligase"/>
</dbReference>
<dbReference type="InterPro" id="IPR005148">
    <property type="entry name" value="Arg-tRNA-synth_N"/>
</dbReference>
<dbReference type="InterPro" id="IPR036695">
    <property type="entry name" value="Arg-tRNA-synth_N_sf"/>
</dbReference>
<dbReference type="InterPro" id="IPR035684">
    <property type="entry name" value="ArgRS_core"/>
</dbReference>
<dbReference type="InterPro" id="IPR008909">
    <property type="entry name" value="DALR_anticod-bd"/>
</dbReference>
<dbReference type="InterPro" id="IPR014729">
    <property type="entry name" value="Rossmann-like_a/b/a_fold"/>
</dbReference>
<dbReference type="InterPro" id="IPR009080">
    <property type="entry name" value="tRNAsynth_Ia_anticodon-bd"/>
</dbReference>
<dbReference type="NCBIfam" id="TIGR00456">
    <property type="entry name" value="argS"/>
    <property type="match status" value="1"/>
</dbReference>
<dbReference type="PANTHER" id="PTHR11956:SF5">
    <property type="entry name" value="ARGININE--TRNA LIGASE, CYTOPLASMIC"/>
    <property type="match status" value="1"/>
</dbReference>
<dbReference type="PANTHER" id="PTHR11956">
    <property type="entry name" value="ARGINYL-TRNA SYNTHETASE"/>
    <property type="match status" value="1"/>
</dbReference>
<dbReference type="Pfam" id="PF03485">
    <property type="entry name" value="Arg_tRNA_synt_N"/>
    <property type="match status" value="1"/>
</dbReference>
<dbReference type="Pfam" id="PF05746">
    <property type="entry name" value="DALR_1"/>
    <property type="match status" value="1"/>
</dbReference>
<dbReference type="Pfam" id="PF00750">
    <property type="entry name" value="tRNA-synt_1d"/>
    <property type="match status" value="1"/>
</dbReference>
<dbReference type="PRINTS" id="PR01038">
    <property type="entry name" value="TRNASYNTHARG"/>
</dbReference>
<dbReference type="SMART" id="SM01016">
    <property type="entry name" value="Arg_tRNA_synt_N"/>
    <property type="match status" value="1"/>
</dbReference>
<dbReference type="SMART" id="SM00836">
    <property type="entry name" value="DALR_1"/>
    <property type="match status" value="1"/>
</dbReference>
<dbReference type="SUPFAM" id="SSF47323">
    <property type="entry name" value="Anticodon-binding domain of a subclass of class I aminoacyl-tRNA synthetases"/>
    <property type="match status" value="1"/>
</dbReference>
<dbReference type="SUPFAM" id="SSF55190">
    <property type="entry name" value="Arginyl-tRNA synthetase (ArgRS), N-terminal 'additional' domain"/>
    <property type="match status" value="1"/>
</dbReference>
<dbReference type="SUPFAM" id="SSF52374">
    <property type="entry name" value="Nucleotidylyl transferase"/>
    <property type="match status" value="1"/>
</dbReference>
<accession>Q54869</accession>
<evidence type="ECO:0000250" key="1"/>
<evidence type="ECO:0000305" key="2"/>
<comment type="catalytic activity">
    <reaction>
        <text>tRNA(Arg) + L-arginine + ATP = L-arginyl-tRNA(Arg) + AMP + diphosphate</text>
        <dbReference type="Rhea" id="RHEA:20301"/>
        <dbReference type="Rhea" id="RHEA-COMP:9658"/>
        <dbReference type="Rhea" id="RHEA-COMP:9673"/>
        <dbReference type="ChEBI" id="CHEBI:30616"/>
        <dbReference type="ChEBI" id="CHEBI:32682"/>
        <dbReference type="ChEBI" id="CHEBI:33019"/>
        <dbReference type="ChEBI" id="CHEBI:78442"/>
        <dbReference type="ChEBI" id="CHEBI:78513"/>
        <dbReference type="ChEBI" id="CHEBI:456215"/>
        <dbReference type="EC" id="6.1.1.19"/>
    </reaction>
</comment>
<comment type="subunit">
    <text evidence="1">Monomer.</text>
</comment>
<comment type="interaction">
    <interactant intactId="EBI-2207421">
        <id>Q54869</id>
    </interactant>
    <interactant intactId="EBI-2207053">
        <id>Q97SE5</id>
        <label>gatC</label>
    </interactant>
    <organismsDiffer>false</organismsDiffer>
    <experiments>2</experiments>
</comment>
<comment type="interaction">
    <interactant intactId="EBI-2207421">
        <id>Q54869</id>
    </interactant>
    <interactant intactId="EBI-2206949">
        <id>Q97NV3</id>
        <label>groES</label>
    </interactant>
    <organismsDiffer>false</organismsDiffer>
    <experiments>2</experiments>
</comment>
<comment type="subcellular location">
    <subcellularLocation>
        <location evidence="1">Cytoplasm</location>
    </subcellularLocation>
</comment>
<comment type="similarity">
    <text evidence="2">Belongs to the class-I aminoacyl-tRNA synthetase family.</text>
</comment>
<gene>
    <name type="primary">argS</name>
    <name type="ordered locus">SP_2078</name>
</gene>
<protein>
    <recommendedName>
        <fullName>Arginine--tRNA ligase</fullName>
        <ecNumber>6.1.1.19</ecNumber>
    </recommendedName>
    <alternativeName>
        <fullName>Arginyl-tRNA synthetase</fullName>
        <shortName>ArgRS</shortName>
    </alternativeName>
</protein>